<feature type="signal peptide" evidence="4">
    <location>
        <begin position="1"/>
        <end position="32"/>
    </location>
</feature>
<feature type="chain" id="PRO_0000428724" description="Sulfhydryl oxidase 1" evidence="1">
    <location>
        <begin position="33"/>
        <end position="750"/>
    </location>
</feature>
<feature type="transmembrane region" description="Helical" evidence="4">
    <location>
        <begin position="713"/>
        <end position="733"/>
    </location>
</feature>
<feature type="domain" description="Thioredoxin" evidence="6">
    <location>
        <begin position="39"/>
        <end position="159"/>
    </location>
</feature>
<feature type="domain" description="ERV/ALR sulfhydryl oxidase" evidence="5">
    <location>
        <begin position="399"/>
        <end position="506"/>
    </location>
</feature>
<feature type="region of interest" description="Disordered" evidence="7">
    <location>
        <begin position="578"/>
        <end position="645"/>
    </location>
</feature>
<feature type="compositionally biased region" description="Basic and acidic residues" evidence="7">
    <location>
        <begin position="624"/>
        <end position="639"/>
    </location>
</feature>
<feature type="active site" description="Nucleophile" evidence="1">
    <location>
        <position position="73"/>
    </location>
</feature>
<feature type="active site" description="Nucleophile" evidence="1">
    <location>
        <position position="76"/>
    </location>
</feature>
<feature type="binding site" evidence="2">
    <location>
        <position position="404"/>
    </location>
    <ligand>
        <name>FAD</name>
        <dbReference type="ChEBI" id="CHEBI:57692"/>
    </ligand>
</feature>
<feature type="binding site" evidence="2">
    <location>
        <position position="411"/>
    </location>
    <ligand>
        <name>FAD</name>
        <dbReference type="ChEBI" id="CHEBI:57692"/>
    </ligand>
</feature>
<feature type="binding site" evidence="2">
    <location>
        <position position="415"/>
    </location>
    <ligand>
        <name>FAD</name>
        <dbReference type="ChEBI" id="CHEBI:57692"/>
    </ligand>
</feature>
<feature type="binding site" evidence="2">
    <location>
        <position position="454"/>
    </location>
    <ligand>
        <name>FAD</name>
        <dbReference type="ChEBI" id="CHEBI:57692"/>
    </ligand>
</feature>
<feature type="binding site" evidence="2">
    <location>
        <position position="458"/>
    </location>
    <ligand>
        <name>FAD</name>
        <dbReference type="ChEBI" id="CHEBI:57692"/>
    </ligand>
</feature>
<feature type="binding site" evidence="2">
    <location>
        <begin position="481"/>
        <end position="488"/>
    </location>
    <ligand>
        <name>FAD</name>
        <dbReference type="ChEBI" id="CHEBI:57692"/>
    </ligand>
</feature>
<feature type="binding site" evidence="2">
    <location>
        <position position="503"/>
    </location>
    <ligand>
        <name>FAD</name>
        <dbReference type="ChEBI" id="CHEBI:57692"/>
    </ligand>
</feature>
<feature type="binding site" evidence="2">
    <location>
        <position position="506"/>
    </location>
    <ligand>
        <name>FAD</name>
        <dbReference type="ChEBI" id="CHEBI:57692"/>
    </ligand>
</feature>
<feature type="modified residue" description="Phosphoserine" evidence="2">
    <location>
        <position position="429"/>
    </location>
</feature>
<feature type="glycosylation site" description="N-linked (GlcNAc...) asparagine" evidence="4">
    <location>
        <position position="133"/>
    </location>
</feature>
<feature type="glycosylation site" description="N-linked (GlcNAc...) asparagine" evidence="4">
    <location>
        <position position="246"/>
    </location>
</feature>
<feature type="glycosylation site" description="N-linked (GlcNAc...) asparagine" evidence="4">
    <location>
        <position position="578"/>
    </location>
</feature>
<feature type="disulfide bond" description="Redox-active" evidence="5 6">
    <location>
        <begin position="73"/>
        <end position="76"/>
    </location>
</feature>
<feature type="disulfide bond" evidence="2">
    <location>
        <begin position="104"/>
        <end position="113"/>
    </location>
</feature>
<feature type="disulfide bond" evidence="5">
    <location>
        <begin position="396"/>
        <end position="408"/>
    </location>
</feature>
<feature type="disulfide bond" evidence="5">
    <location>
        <begin position="452"/>
        <end position="455"/>
    </location>
</feature>
<feature type="disulfide bond" evidence="5">
    <location>
        <begin position="512"/>
        <end position="515"/>
    </location>
</feature>
<organism>
    <name type="scientific">Pongo abelii</name>
    <name type="common">Sumatran orangutan</name>
    <name type="synonym">Pongo pygmaeus abelii</name>
    <dbReference type="NCBI Taxonomy" id="9601"/>
    <lineage>
        <taxon>Eukaryota</taxon>
        <taxon>Metazoa</taxon>
        <taxon>Chordata</taxon>
        <taxon>Craniata</taxon>
        <taxon>Vertebrata</taxon>
        <taxon>Euteleostomi</taxon>
        <taxon>Mammalia</taxon>
        <taxon>Eutheria</taxon>
        <taxon>Euarchontoglires</taxon>
        <taxon>Primates</taxon>
        <taxon>Haplorrhini</taxon>
        <taxon>Catarrhini</taxon>
        <taxon>Hominidae</taxon>
        <taxon>Pongo</taxon>
    </lineage>
</organism>
<gene>
    <name type="primary">QSOX1</name>
    <name type="synonym">QSCN6</name>
</gene>
<protein>
    <recommendedName>
        <fullName>Sulfhydryl oxidase 1</fullName>
        <ecNumber>1.8.3.2</ecNumber>
    </recommendedName>
    <alternativeName>
        <fullName>Quiescin Q6</fullName>
    </alternativeName>
</protein>
<reference key="1">
    <citation type="submission" date="2008-02" db="EMBL/GenBank/DDBJ databases">
        <title>A 6x draft sequence assembly of the Pongo pygmaeus abelii genome.</title>
        <authorList>
            <person name="Wilson R.K."/>
            <person name="Mardis E."/>
        </authorList>
    </citation>
    <scope>NUCLEOTIDE SEQUENCE [LARGE SCALE GENOMIC DNA]</scope>
</reference>
<accession>H2N4I1</accession>
<name>QSOX1_PONAB</name>
<comment type="function">
    <text evidence="2">Catalyzes the oxidation of sulfhydryl groups in peptide and protein thiols to disulfides with the reduction of oxygen to hydrogen peroxide. Plays a role in disulfide bond formation in a variety of extracellular proteins. In fibroblasts, required for normal incorporation of laminin into the extracellular matrix, and thereby for normal cell-cell adhesion and cell migration.</text>
</comment>
<comment type="catalytic activity">
    <reaction evidence="2">
        <text>2 R'C(R)SH + O2 = R'C(R)S-S(R)CR' + H2O2</text>
        <dbReference type="Rhea" id="RHEA:17357"/>
        <dbReference type="ChEBI" id="CHEBI:15379"/>
        <dbReference type="ChEBI" id="CHEBI:16240"/>
        <dbReference type="ChEBI" id="CHEBI:16520"/>
        <dbReference type="ChEBI" id="CHEBI:17412"/>
        <dbReference type="EC" id="1.8.3.2"/>
    </reaction>
</comment>
<comment type="cofactor">
    <cofactor evidence="2">
        <name>FAD</name>
        <dbReference type="ChEBI" id="CHEBI:57692"/>
    </cofactor>
    <text evidence="2">Binds 1 FAD per subunit.</text>
</comment>
<comment type="subunit">
    <text evidence="3">Monomer.</text>
</comment>
<comment type="subcellular location">
    <subcellularLocation>
        <location evidence="2">Golgi apparatus membrane</location>
        <topology evidence="2">Single-pass membrane protein</topology>
    </subcellularLocation>
    <subcellularLocation>
        <location evidence="2">Secreted</location>
    </subcellularLocation>
    <text evidence="2">A small proportion is secreted, probably via a proteolytic cleavage that removes the membrane anchor.</text>
</comment>
<comment type="PTM">
    <text evidence="2">N-glycosylated. O-glycosylated on Thr and Ser residues.</text>
</comment>
<comment type="similarity">
    <text evidence="8">Belongs to the quiescin-sulfhydryl oxidase (QSOX) family.</text>
</comment>
<sequence>MGRCNRGSGPPSSLLLLLLLLLWLLAVPGASAAPRSALYSPSDPLTLLQADTVRGAVLGSRSAWAVEFFASWCGHCIAFAPTWKALAEDVKAWRPALNLAALDCAEETNSAVCRDFNIPGFPTVRFFKAFTKNGSGAVFPVAGADVQTLRERLIDALESHHDTWPPACPPLEPARLEEIDGFFARNNEEYLALIFEKGGSYLGREVALDLSQHKGVAVRRVLNTEANVVRKFGVTDFPSCYLLFRNGSVSRVPVLMESRSFYTAYLQRLSGLTREAAQTTVAPTTANKIAPTVWKFADRSKIYMADLESALHYILRIEVGRFPVLEGQCLVALKKFVAVLAKYFPGRPLVQNFLHSVNEWLKRQKRNKIPYSFFKTALDDRKEGAVLAKKVNWIGCQGSEPHFRGFPCSLWVLFHFLTVQAARQNIDRSQEAAKAKEVLPAIRGYVHYFFGCRDCASHFEQMAAASMHRVRSPNAAVLWLWSSHNRVNARLAGAPSEDPQFPKVQWPPRELCSACHNERLDVPVWDVEATLNFLKAHFSPSNIILDFAAAGSAAQREAQNVAAAPELAMGALELESRNSTVDLGKPEMMKSSTNTTPDVPAERPEASRPPKLRPGLGAAPGQEPPEHMAELQTNEREQPRGQWHLSKRDTGAALLAESRAEKNHLWGPSEVRRVGRSSKQLVDIPEGQLEAQAGRGRGQWLQVLGGGFSYLDISLCVGLYSLSFMGLLAMYAYFRAKIRALKGHAGHPAA</sequence>
<keyword id="KW-1015">Disulfide bond</keyword>
<keyword id="KW-0274">FAD</keyword>
<keyword id="KW-0285">Flavoprotein</keyword>
<keyword id="KW-0325">Glycoprotein</keyword>
<keyword id="KW-0333">Golgi apparatus</keyword>
<keyword id="KW-0472">Membrane</keyword>
<keyword id="KW-0560">Oxidoreductase</keyword>
<keyword id="KW-0597">Phosphoprotein</keyword>
<keyword id="KW-1185">Reference proteome</keyword>
<keyword id="KW-0964">Secreted</keyword>
<keyword id="KW-0732">Signal</keyword>
<keyword id="KW-0812">Transmembrane</keyword>
<keyword id="KW-1133">Transmembrane helix</keyword>
<proteinExistence type="inferred from homology"/>
<evidence type="ECO:0000250" key="1"/>
<evidence type="ECO:0000250" key="2">
    <source>
        <dbReference type="UniProtKB" id="O00391"/>
    </source>
</evidence>
<evidence type="ECO:0000250" key="3">
    <source>
        <dbReference type="UniProtKB" id="Q6IUU3"/>
    </source>
</evidence>
<evidence type="ECO:0000255" key="4"/>
<evidence type="ECO:0000255" key="5">
    <source>
        <dbReference type="PROSITE-ProRule" id="PRU00654"/>
    </source>
</evidence>
<evidence type="ECO:0000255" key="6">
    <source>
        <dbReference type="PROSITE-ProRule" id="PRU00691"/>
    </source>
</evidence>
<evidence type="ECO:0000256" key="7">
    <source>
        <dbReference type="SAM" id="MobiDB-lite"/>
    </source>
</evidence>
<evidence type="ECO:0000305" key="8"/>
<dbReference type="EC" id="1.8.3.2"/>
<dbReference type="EMBL" id="ABGA01039131">
    <property type="status" value="NOT_ANNOTATED_CDS"/>
    <property type="molecule type" value="Genomic_DNA"/>
</dbReference>
<dbReference type="EMBL" id="ABGA01039132">
    <property type="status" value="NOT_ANNOTATED_CDS"/>
    <property type="molecule type" value="Genomic_DNA"/>
</dbReference>
<dbReference type="RefSeq" id="XP_002809780.2">
    <property type="nucleotide sequence ID" value="XM_002809734.3"/>
</dbReference>
<dbReference type="SMR" id="H2N4I1"/>
<dbReference type="FunCoup" id="H2N4I1">
    <property type="interactions" value="207"/>
</dbReference>
<dbReference type="STRING" id="9601.ENSPPYP00000000519"/>
<dbReference type="GlyCosmos" id="H2N4I1">
    <property type="glycosylation" value="3 sites, No reported glycans"/>
</dbReference>
<dbReference type="GeneID" id="100461175"/>
<dbReference type="KEGG" id="pon:100461175"/>
<dbReference type="CTD" id="5768"/>
<dbReference type="eggNOG" id="KOG1731">
    <property type="taxonomic scope" value="Eukaryota"/>
</dbReference>
<dbReference type="HOGENOM" id="CLU_020182_1_0_1"/>
<dbReference type="InParanoid" id="H2N4I1"/>
<dbReference type="OrthoDB" id="59470at2759"/>
<dbReference type="TreeFam" id="TF316749"/>
<dbReference type="Proteomes" id="UP000001595">
    <property type="component" value="Unplaced"/>
</dbReference>
<dbReference type="GO" id="GO:0005615">
    <property type="term" value="C:extracellular space"/>
    <property type="evidence" value="ECO:0007669"/>
    <property type="project" value="TreeGrafter"/>
</dbReference>
<dbReference type="GO" id="GO:0000139">
    <property type="term" value="C:Golgi membrane"/>
    <property type="evidence" value="ECO:0000250"/>
    <property type="project" value="UniProtKB"/>
</dbReference>
<dbReference type="GO" id="GO:0016971">
    <property type="term" value="F:flavin-dependent sulfhydryl oxidase activity"/>
    <property type="evidence" value="ECO:0007669"/>
    <property type="project" value="InterPro"/>
</dbReference>
<dbReference type="GO" id="GO:0003756">
    <property type="term" value="F:protein disulfide isomerase activity"/>
    <property type="evidence" value="ECO:0007669"/>
    <property type="project" value="TreeGrafter"/>
</dbReference>
<dbReference type="GO" id="GO:0006457">
    <property type="term" value="P:protein folding"/>
    <property type="evidence" value="ECO:0007669"/>
    <property type="project" value="TreeGrafter"/>
</dbReference>
<dbReference type="CDD" id="cd02992">
    <property type="entry name" value="PDI_a_QSOX"/>
    <property type="match status" value="1"/>
</dbReference>
<dbReference type="FunFam" id="1.20.120.1960:FF:000001">
    <property type="entry name" value="Sulfhydryl oxidase"/>
    <property type="match status" value="1"/>
</dbReference>
<dbReference type="FunFam" id="1.20.120.310:FF:000001">
    <property type="entry name" value="Sulfhydryl oxidase"/>
    <property type="match status" value="1"/>
</dbReference>
<dbReference type="FunFam" id="3.40.30.10:FF:000073">
    <property type="entry name" value="Sulfhydryl oxidase"/>
    <property type="match status" value="1"/>
</dbReference>
<dbReference type="FunFam" id="3.40.30.10:FF:000080">
    <property type="entry name" value="Sulfhydryl oxidase"/>
    <property type="match status" value="1"/>
</dbReference>
<dbReference type="Gene3D" id="1.20.120.310">
    <property type="entry name" value="ERV/ALR sulfhydryl oxidase domain"/>
    <property type="match status" value="1"/>
</dbReference>
<dbReference type="Gene3D" id="3.40.30.10">
    <property type="entry name" value="Glutaredoxin"/>
    <property type="match status" value="2"/>
</dbReference>
<dbReference type="Gene3D" id="1.20.120.1960">
    <property type="entry name" value="QSOX sulfhydryl oxidase domain"/>
    <property type="match status" value="1"/>
</dbReference>
<dbReference type="InterPro" id="IPR036774">
    <property type="entry name" value="ERV/ALR_sulphydryl_oxid_sf"/>
</dbReference>
<dbReference type="InterPro" id="IPR017905">
    <property type="entry name" value="ERV/ALR_sulphydryl_oxidase"/>
</dbReference>
<dbReference type="InterPro" id="IPR040986">
    <property type="entry name" value="QSOX_FAD-bd_dom"/>
</dbReference>
<dbReference type="InterPro" id="IPR042568">
    <property type="entry name" value="QSOX_FAD-bd_sf"/>
</dbReference>
<dbReference type="InterPro" id="IPR041269">
    <property type="entry name" value="QSOX_Trx1"/>
</dbReference>
<dbReference type="InterPro" id="IPR039798">
    <property type="entry name" value="Sulfhydryl_oxidase"/>
</dbReference>
<dbReference type="InterPro" id="IPR036249">
    <property type="entry name" value="Thioredoxin-like_sf"/>
</dbReference>
<dbReference type="InterPro" id="IPR013766">
    <property type="entry name" value="Thioredoxin_domain"/>
</dbReference>
<dbReference type="PANTHER" id="PTHR22897">
    <property type="entry name" value="QUIESCIN Q6-RELATED SULFHYDRYL OXIDASE"/>
    <property type="match status" value="1"/>
</dbReference>
<dbReference type="PANTHER" id="PTHR22897:SF6">
    <property type="entry name" value="SULFHYDRYL OXIDASE 1"/>
    <property type="match status" value="1"/>
</dbReference>
<dbReference type="Pfam" id="PF04777">
    <property type="entry name" value="Evr1_Alr"/>
    <property type="match status" value="1"/>
</dbReference>
<dbReference type="Pfam" id="PF18371">
    <property type="entry name" value="FAD_SOX"/>
    <property type="match status" value="1"/>
</dbReference>
<dbReference type="Pfam" id="PF18108">
    <property type="entry name" value="QSOX_Trx1"/>
    <property type="match status" value="1"/>
</dbReference>
<dbReference type="Pfam" id="PF00085">
    <property type="entry name" value="Thioredoxin"/>
    <property type="match status" value="1"/>
</dbReference>
<dbReference type="SUPFAM" id="SSF69000">
    <property type="entry name" value="FAD-dependent thiol oxidase"/>
    <property type="match status" value="1"/>
</dbReference>
<dbReference type="SUPFAM" id="SSF52833">
    <property type="entry name" value="Thioredoxin-like"/>
    <property type="match status" value="1"/>
</dbReference>
<dbReference type="PROSITE" id="PS51324">
    <property type="entry name" value="ERV_ALR"/>
    <property type="match status" value="1"/>
</dbReference>
<dbReference type="PROSITE" id="PS51352">
    <property type="entry name" value="THIOREDOXIN_2"/>
    <property type="match status" value="1"/>
</dbReference>